<name>AZOR_ACIET</name>
<organism>
    <name type="scientific">Acidovorax ebreus (strain TPSY)</name>
    <name type="common">Diaphorobacter sp. (strain TPSY)</name>
    <dbReference type="NCBI Taxonomy" id="535289"/>
    <lineage>
        <taxon>Bacteria</taxon>
        <taxon>Pseudomonadati</taxon>
        <taxon>Pseudomonadota</taxon>
        <taxon>Betaproteobacteria</taxon>
        <taxon>Burkholderiales</taxon>
        <taxon>Comamonadaceae</taxon>
        <taxon>Diaphorobacter</taxon>
    </lineage>
</organism>
<reference key="1">
    <citation type="submission" date="2009-01" db="EMBL/GenBank/DDBJ databases">
        <title>Complete sequence of Diaphorobacter sp. TPSY.</title>
        <authorList>
            <consortium name="US DOE Joint Genome Institute"/>
            <person name="Lucas S."/>
            <person name="Copeland A."/>
            <person name="Lapidus A."/>
            <person name="Glavina del Rio T."/>
            <person name="Tice H."/>
            <person name="Bruce D."/>
            <person name="Goodwin L."/>
            <person name="Pitluck S."/>
            <person name="Chertkov O."/>
            <person name="Brettin T."/>
            <person name="Detter J.C."/>
            <person name="Han C."/>
            <person name="Larimer F."/>
            <person name="Land M."/>
            <person name="Hauser L."/>
            <person name="Kyrpides N."/>
            <person name="Mikhailova N."/>
            <person name="Coates J.D."/>
        </authorList>
    </citation>
    <scope>NUCLEOTIDE SEQUENCE [LARGE SCALE GENOMIC DNA]</scope>
    <source>
        <strain>TPSY</strain>
    </source>
</reference>
<accession>B9MI46</accession>
<comment type="function">
    <text evidence="1">Quinone reductase that provides resistance to thiol-specific stress caused by electrophilic quinones.</text>
</comment>
<comment type="function">
    <text evidence="1">Also exhibits azoreductase activity. Catalyzes the reductive cleavage of the azo bond in aromatic azo compounds to the corresponding amines.</text>
</comment>
<comment type="catalytic activity">
    <reaction evidence="1">
        <text>2 a quinone + NADH + H(+) = 2 a 1,4-benzosemiquinone + NAD(+)</text>
        <dbReference type="Rhea" id="RHEA:65952"/>
        <dbReference type="ChEBI" id="CHEBI:15378"/>
        <dbReference type="ChEBI" id="CHEBI:57540"/>
        <dbReference type="ChEBI" id="CHEBI:57945"/>
        <dbReference type="ChEBI" id="CHEBI:132124"/>
        <dbReference type="ChEBI" id="CHEBI:134225"/>
    </reaction>
</comment>
<comment type="catalytic activity">
    <reaction evidence="1">
        <text>N,N-dimethyl-1,4-phenylenediamine + anthranilate + 2 NAD(+) = 2-(4-dimethylaminophenyl)diazenylbenzoate + 2 NADH + 2 H(+)</text>
        <dbReference type="Rhea" id="RHEA:55872"/>
        <dbReference type="ChEBI" id="CHEBI:15378"/>
        <dbReference type="ChEBI" id="CHEBI:15783"/>
        <dbReference type="ChEBI" id="CHEBI:16567"/>
        <dbReference type="ChEBI" id="CHEBI:57540"/>
        <dbReference type="ChEBI" id="CHEBI:57945"/>
        <dbReference type="ChEBI" id="CHEBI:71579"/>
        <dbReference type="EC" id="1.7.1.17"/>
    </reaction>
</comment>
<comment type="cofactor">
    <cofactor evidence="1">
        <name>FMN</name>
        <dbReference type="ChEBI" id="CHEBI:58210"/>
    </cofactor>
    <text evidence="1">Binds 1 FMN per subunit.</text>
</comment>
<comment type="subunit">
    <text evidence="1">Homodimer.</text>
</comment>
<comment type="similarity">
    <text evidence="1">Belongs to the azoreductase type 1 family.</text>
</comment>
<dbReference type="EC" id="1.6.5.-" evidence="1"/>
<dbReference type="EC" id="1.7.1.17" evidence="1"/>
<dbReference type="EMBL" id="CP001392">
    <property type="protein sequence ID" value="ACM32978.1"/>
    <property type="molecule type" value="Genomic_DNA"/>
</dbReference>
<dbReference type="RefSeq" id="WP_015913094.1">
    <property type="nucleotide sequence ID" value="NC_011992.1"/>
</dbReference>
<dbReference type="SMR" id="B9MI46"/>
<dbReference type="KEGG" id="dia:Dtpsy_1517"/>
<dbReference type="eggNOG" id="COG1182">
    <property type="taxonomic scope" value="Bacteria"/>
</dbReference>
<dbReference type="HOGENOM" id="CLU_088964_0_0_4"/>
<dbReference type="Proteomes" id="UP000000450">
    <property type="component" value="Chromosome"/>
</dbReference>
<dbReference type="GO" id="GO:0009055">
    <property type="term" value="F:electron transfer activity"/>
    <property type="evidence" value="ECO:0007669"/>
    <property type="project" value="UniProtKB-UniRule"/>
</dbReference>
<dbReference type="GO" id="GO:0010181">
    <property type="term" value="F:FMN binding"/>
    <property type="evidence" value="ECO:0007669"/>
    <property type="project" value="UniProtKB-UniRule"/>
</dbReference>
<dbReference type="GO" id="GO:0016652">
    <property type="term" value="F:oxidoreductase activity, acting on NAD(P)H as acceptor"/>
    <property type="evidence" value="ECO:0007669"/>
    <property type="project" value="UniProtKB-UniRule"/>
</dbReference>
<dbReference type="GO" id="GO:0016655">
    <property type="term" value="F:oxidoreductase activity, acting on NAD(P)H, quinone or similar compound as acceptor"/>
    <property type="evidence" value="ECO:0007669"/>
    <property type="project" value="InterPro"/>
</dbReference>
<dbReference type="Gene3D" id="3.40.50.360">
    <property type="match status" value="1"/>
</dbReference>
<dbReference type="HAMAP" id="MF_01216">
    <property type="entry name" value="Azoreductase_type1"/>
    <property type="match status" value="1"/>
</dbReference>
<dbReference type="InterPro" id="IPR003680">
    <property type="entry name" value="Flavodoxin_fold"/>
</dbReference>
<dbReference type="InterPro" id="IPR029039">
    <property type="entry name" value="Flavoprotein-like_sf"/>
</dbReference>
<dbReference type="InterPro" id="IPR050104">
    <property type="entry name" value="FMN-dep_NADH:Q_OxRdtase_AzoR1"/>
</dbReference>
<dbReference type="InterPro" id="IPR023048">
    <property type="entry name" value="NADH:quinone_OxRdtase_FMN_depd"/>
</dbReference>
<dbReference type="PANTHER" id="PTHR43741">
    <property type="entry name" value="FMN-DEPENDENT NADH-AZOREDUCTASE 1"/>
    <property type="match status" value="1"/>
</dbReference>
<dbReference type="PANTHER" id="PTHR43741:SF4">
    <property type="entry name" value="FMN-DEPENDENT NADH:QUINONE OXIDOREDUCTASE"/>
    <property type="match status" value="1"/>
</dbReference>
<dbReference type="Pfam" id="PF02525">
    <property type="entry name" value="Flavodoxin_2"/>
    <property type="match status" value="1"/>
</dbReference>
<dbReference type="SUPFAM" id="SSF52218">
    <property type="entry name" value="Flavoproteins"/>
    <property type="match status" value="1"/>
</dbReference>
<sequence>MQLLHIDSAITGDQSVSRQLTAQIVEAWKASHPATQVSYLDLVADAPAHFTMDAMAPRTGQTDGLSEAQQRENAVSERLVSQFLAADVVVIGAPFYNFAIPTQLKAWIDRIAQPGRTFQYTANGPEGLAKGKTVIVASSRGGVYSTSEGGRAMEHQESYLQTVLGFFGVTDVRFVRAEGVAMGGDAKAQALAAAAQAIEAHVKAHAANQDRVSQAA</sequence>
<evidence type="ECO:0000255" key="1">
    <source>
        <dbReference type="HAMAP-Rule" id="MF_01216"/>
    </source>
</evidence>
<proteinExistence type="inferred from homology"/>
<keyword id="KW-0285">Flavoprotein</keyword>
<keyword id="KW-0288">FMN</keyword>
<keyword id="KW-0520">NAD</keyword>
<keyword id="KW-0560">Oxidoreductase</keyword>
<keyword id="KW-1185">Reference proteome</keyword>
<protein>
    <recommendedName>
        <fullName evidence="1">FMN-dependent NADH:quinone oxidoreductase</fullName>
        <ecNumber evidence="1">1.6.5.-</ecNumber>
    </recommendedName>
    <alternativeName>
        <fullName evidence="1">Azo-dye reductase</fullName>
    </alternativeName>
    <alternativeName>
        <fullName evidence="1">FMN-dependent NADH-azo compound oxidoreductase</fullName>
    </alternativeName>
    <alternativeName>
        <fullName evidence="1">FMN-dependent NADH-azoreductase</fullName>
        <ecNumber evidence="1">1.7.1.17</ecNumber>
    </alternativeName>
</protein>
<feature type="chain" id="PRO_1000164756" description="FMN-dependent NADH:quinone oxidoreductase">
    <location>
        <begin position="1"/>
        <end position="216"/>
    </location>
</feature>
<feature type="binding site" evidence="1">
    <location>
        <begin position="15"/>
        <end position="17"/>
    </location>
    <ligand>
        <name>FMN</name>
        <dbReference type="ChEBI" id="CHEBI:58210"/>
    </ligand>
</feature>
<feature type="binding site" evidence="1">
    <location>
        <begin position="139"/>
        <end position="142"/>
    </location>
    <ligand>
        <name>FMN</name>
        <dbReference type="ChEBI" id="CHEBI:58210"/>
    </ligand>
</feature>
<gene>
    <name evidence="1" type="primary">azoR</name>
    <name type="ordered locus">Dtpsy_1517</name>
</gene>